<feature type="chain" id="PRO_0000264514" description="DNA-directed RNA polymerase subunit alpha">
    <location>
        <begin position="1"/>
        <end position="336"/>
    </location>
</feature>
<feature type="region of interest" description="Alpha N-terminal domain (alpha-NTD)" evidence="1">
    <location>
        <begin position="1"/>
        <end position="232"/>
    </location>
</feature>
<feature type="region of interest" description="Alpha C-terminal domain (alpha-CTD)" evidence="1">
    <location>
        <begin position="248"/>
        <end position="336"/>
    </location>
</feature>
<gene>
    <name evidence="1" type="primary">rpoA</name>
    <name type="ordered locus">Meso_1654</name>
</gene>
<keyword id="KW-0240">DNA-directed RNA polymerase</keyword>
<keyword id="KW-0548">Nucleotidyltransferase</keyword>
<keyword id="KW-0804">Transcription</keyword>
<keyword id="KW-0808">Transferase</keyword>
<name>RPOA_CHESB</name>
<comment type="function">
    <text evidence="1">DNA-dependent RNA polymerase catalyzes the transcription of DNA into RNA using the four ribonucleoside triphosphates as substrates.</text>
</comment>
<comment type="catalytic activity">
    <reaction evidence="1">
        <text>RNA(n) + a ribonucleoside 5'-triphosphate = RNA(n+1) + diphosphate</text>
        <dbReference type="Rhea" id="RHEA:21248"/>
        <dbReference type="Rhea" id="RHEA-COMP:14527"/>
        <dbReference type="Rhea" id="RHEA-COMP:17342"/>
        <dbReference type="ChEBI" id="CHEBI:33019"/>
        <dbReference type="ChEBI" id="CHEBI:61557"/>
        <dbReference type="ChEBI" id="CHEBI:140395"/>
        <dbReference type="EC" id="2.7.7.6"/>
    </reaction>
</comment>
<comment type="subunit">
    <text evidence="1">Homodimer. The RNAP catalytic core consists of 2 alpha, 1 beta, 1 beta' and 1 omega subunit. When a sigma factor is associated with the core the holoenzyme is formed, which can initiate transcription.</text>
</comment>
<comment type="domain">
    <text evidence="1">The N-terminal domain is essential for RNAP assembly and basal transcription, whereas the C-terminal domain is involved in interaction with transcriptional regulators and with upstream promoter elements.</text>
</comment>
<comment type="similarity">
    <text evidence="1">Belongs to the RNA polymerase alpha chain family.</text>
</comment>
<reference key="1">
    <citation type="submission" date="2006-06" db="EMBL/GenBank/DDBJ databases">
        <title>Complete sequence of chromosome of Mesorhizobium sp. BNC1.</title>
        <authorList>
            <consortium name="US DOE Joint Genome Institute"/>
            <person name="Copeland A."/>
            <person name="Lucas S."/>
            <person name="Lapidus A."/>
            <person name="Barry K."/>
            <person name="Detter J.C."/>
            <person name="Glavina del Rio T."/>
            <person name="Hammon N."/>
            <person name="Israni S."/>
            <person name="Dalin E."/>
            <person name="Tice H."/>
            <person name="Pitluck S."/>
            <person name="Chertkov O."/>
            <person name="Brettin T."/>
            <person name="Bruce D."/>
            <person name="Han C."/>
            <person name="Tapia R."/>
            <person name="Gilna P."/>
            <person name="Schmutz J."/>
            <person name="Larimer F."/>
            <person name="Land M."/>
            <person name="Hauser L."/>
            <person name="Kyrpides N."/>
            <person name="Mikhailova N."/>
            <person name="Richardson P."/>
        </authorList>
    </citation>
    <scope>NUCLEOTIDE SEQUENCE [LARGE SCALE GENOMIC DNA]</scope>
    <source>
        <strain>BNC1</strain>
    </source>
</reference>
<evidence type="ECO:0000255" key="1">
    <source>
        <dbReference type="HAMAP-Rule" id="MF_00059"/>
    </source>
</evidence>
<accession>Q11HS6</accession>
<organism>
    <name type="scientific">Chelativorans sp. (strain BNC1)</name>
    <dbReference type="NCBI Taxonomy" id="266779"/>
    <lineage>
        <taxon>Bacteria</taxon>
        <taxon>Pseudomonadati</taxon>
        <taxon>Pseudomonadota</taxon>
        <taxon>Alphaproteobacteria</taxon>
        <taxon>Hyphomicrobiales</taxon>
        <taxon>Phyllobacteriaceae</taxon>
        <taxon>Chelativorans</taxon>
    </lineage>
</organism>
<protein>
    <recommendedName>
        <fullName evidence="1">DNA-directed RNA polymerase subunit alpha</fullName>
        <shortName evidence="1">RNAP subunit alpha</shortName>
        <ecNumber evidence="1">2.7.7.6</ecNumber>
    </recommendedName>
    <alternativeName>
        <fullName evidence="1">RNA polymerase subunit alpha</fullName>
    </alternativeName>
    <alternativeName>
        <fullName evidence="1">Transcriptase subunit alpha</fullName>
    </alternativeName>
</protein>
<proteinExistence type="inferred from homology"/>
<sequence length="336" mass="37204">MIQKNWQELIKPSKIEFTSKGRTQTNLVAEPLERGFGLTLGNALRRVLLSSLRGAAVTAVQIDGVLHEFSSIAGVREDVTDIVLNIKEIAIRMEGDGPKRMVLRKQGPGAVTAGDIQTVGDVEILNPEHVICTLDQGAEIRMEFTVNTGKGYVPADRNRAEDAPIGLIPVDSLYSPVKKVSYKVENTREGQVLDYDKLTMTIETDGSVTGEDAVAFAARILQDQLGLFVNFEEPQKEVPAEQVTELAFNPALLKKVDELELSVRSANCLKNDNIVYIGDLIQKTEAEMLRTPNFGRKSLNEIKEVLASMGLHLGMEVPDWPPDNIEELAKRYEDQY</sequence>
<dbReference type="EC" id="2.7.7.6" evidence="1"/>
<dbReference type="EMBL" id="CP000390">
    <property type="protein sequence ID" value="ABG63049.1"/>
    <property type="molecule type" value="Genomic_DNA"/>
</dbReference>
<dbReference type="SMR" id="Q11HS6"/>
<dbReference type="STRING" id="266779.Meso_1654"/>
<dbReference type="KEGG" id="mes:Meso_1654"/>
<dbReference type="eggNOG" id="COG0202">
    <property type="taxonomic scope" value="Bacteria"/>
</dbReference>
<dbReference type="HOGENOM" id="CLU_053084_0_0_5"/>
<dbReference type="OrthoDB" id="9805706at2"/>
<dbReference type="GO" id="GO:0005737">
    <property type="term" value="C:cytoplasm"/>
    <property type="evidence" value="ECO:0007669"/>
    <property type="project" value="UniProtKB-ARBA"/>
</dbReference>
<dbReference type="GO" id="GO:0000428">
    <property type="term" value="C:DNA-directed RNA polymerase complex"/>
    <property type="evidence" value="ECO:0007669"/>
    <property type="project" value="UniProtKB-KW"/>
</dbReference>
<dbReference type="GO" id="GO:0003677">
    <property type="term" value="F:DNA binding"/>
    <property type="evidence" value="ECO:0007669"/>
    <property type="project" value="UniProtKB-UniRule"/>
</dbReference>
<dbReference type="GO" id="GO:0003899">
    <property type="term" value="F:DNA-directed RNA polymerase activity"/>
    <property type="evidence" value="ECO:0007669"/>
    <property type="project" value="UniProtKB-UniRule"/>
</dbReference>
<dbReference type="GO" id="GO:0046983">
    <property type="term" value="F:protein dimerization activity"/>
    <property type="evidence" value="ECO:0007669"/>
    <property type="project" value="InterPro"/>
</dbReference>
<dbReference type="GO" id="GO:0006351">
    <property type="term" value="P:DNA-templated transcription"/>
    <property type="evidence" value="ECO:0007669"/>
    <property type="project" value="UniProtKB-UniRule"/>
</dbReference>
<dbReference type="CDD" id="cd06928">
    <property type="entry name" value="RNAP_alpha_NTD"/>
    <property type="match status" value="1"/>
</dbReference>
<dbReference type="FunFam" id="1.10.150.20:FF:000001">
    <property type="entry name" value="DNA-directed RNA polymerase subunit alpha"/>
    <property type="match status" value="1"/>
</dbReference>
<dbReference type="FunFam" id="2.170.120.12:FF:000001">
    <property type="entry name" value="DNA-directed RNA polymerase subunit alpha"/>
    <property type="match status" value="1"/>
</dbReference>
<dbReference type="Gene3D" id="1.10.150.20">
    <property type="entry name" value="5' to 3' exonuclease, C-terminal subdomain"/>
    <property type="match status" value="1"/>
</dbReference>
<dbReference type="Gene3D" id="2.170.120.12">
    <property type="entry name" value="DNA-directed RNA polymerase, insert domain"/>
    <property type="match status" value="1"/>
</dbReference>
<dbReference type="Gene3D" id="3.30.1360.10">
    <property type="entry name" value="RNA polymerase, RBP11-like subunit"/>
    <property type="match status" value="1"/>
</dbReference>
<dbReference type="HAMAP" id="MF_00059">
    <property type="entry name" value="RNApol_bact_RpoA"/>
    <property type="match status" value="1"/>
</dbReference>
<dbReference type="InterPro" id="IPR011262">
    <property type="entry name" value="DNA-dir_RNA_pol_insert"/>
</dbReference>
<dbReference type="InterPro" id="IPR011263">
    <property type="entry name" value="DNA-dir_RNA_pol_RpoA/D/Rpb3"/>
</dbReference>
<dbReference type="InterPro" id="IPR011773">
    <property type="entry name" value="DNA-dir_RpoA"/>
</dbReference>
<dbReference type="InterPro" id="IPR036603">
    <property type="entry name" value="RBP11-like"/>
</dbReference>
<dbReference type="InterPro" id="IPR011260">
    <property type="entry name" value="RNAP_asu_C"/>
</dbReference>
<dbReference type="InterPro" id="IPR036643">
    <property type="entry name" value="RNApol_insert_sf"/>
</dbReference>
<dbReference type="NCBIfam" id="NF003513">
    <property type="entry name" value="PRK05182.1-2"/>
    <property type="match status" value="1"/>
</dbReference>
<dbReference type="NCBIfam" id="NF003519">
    <property type="entry name" value="PRK05182.2-5"/>
    <property type="match status" value="1"/>
</dbReference>
<dbReference type="NCBIfam" id="TIGR02027">
    <property type="entry name" value="rpoA"/>
    <property type="match status" value="1"/>
</dbReference>
<dbReference type="Pfam" id="PF01000">
    <property type="entry name" value="RNA_pol_A_bac"/>
    <property type="match status" value="1"/>
</dbReference>
<dbReference type="Pfam" id="PF03118">
    <property type="entry name" value="RNA_pol_A_CTD"/>
    <property type="match status" value="1"/>
</dbReference>
<dbReference type="Pfam" id="PF01193">
    <property type="entry name" value="RNA_pol_L"/>
    <property type="match status" value="1"/>
</dbReference>
<dbReference type="SMART" id="SM00662">
    <property type="entry name" value="RPOLD"/>
    <property type="match status" value="1"/>
</dbReference>
<dbReference type="SUPFAM" id="SSF47789">
    <property type="entry name" value="C-terminal domain of RNA polymerase alpha subunit"/>
    <property type="match status" value="1"/>
</dbReference>
<dbReference type="SUPFAM" id="SSF56553">
    <property type="entry name" value="Insert subdomain of RNA polymerase alpha subunit"/>
    <property type="match status" value="1"/>
</dbReference>
<dbReference type="SUPFAM" id="SSF55257">
    <property type="entry name" value="RBP11-like subunits of RNA polymerase"/>
    <property type="match status" value="1"/>
</dbReference>